<protein>
    <recommendedName>
        <fullName evidence="1">Nucleoside diphosphate kinase</fullName>
        <shortName evidence="1">NDK</shortName>
        <shortName evidence="1">NDP kinase</shortName>
        <ecNumber evidence="1">2.7.4.6</ecNumber>
    </recommendedName>
    <alternativeName>
        <fullName evidence="1">Nucleoside-2-P kinase</fullName>
    </alternativeName>
</protein>
<comment type="function">
    <text evidence="1">Major role in the synthesis of nucleoside triphosphates other than ATP. The ATP gamma phosphate is transferred to the NDP beta phosphate via a ping-pong mechanism, using a phosphorylated active-site intermediate.</text>
</comment>
<comment type="catalytic activity">
    <reaction evidence="1">
        <text>a 2'-deoxyribonucleoside 5'-diphosphate + ATP = a 2'-deoxyribonucleoside 5'-triphosphate + ADP</text>
        <dbReference type="Rhea" id="RHEA:44640"/>
        <dbReference type="ChEBI" id="CHEBI:30616"/>
        <dbReference type="ChEBI" id="CHEBI:61560"/>
        <dbReference type="ChEBI" id="CHEBI:73316"/>
        <dbReference type="ChEBI" id="CHEBI:456216"/>
        <dbReference type="EC" id="2.7.4.6"/>
    </reaction>
</comment>
<comment type="catalytic activity">
    <reaction evidence="1">
        <text>a ribonucleoside 5'-diphosphate + ATP = a ribonucleoside 5'-triphosphate + ADP</text>
        <dbReference type="Rhea" id="RHEA:18113"/>
        <dbReference type="ChEBI" id="CHEBI:30616"/>
        <dbReference type="ChEBI" id="CHEBI:57930"/>
        <dbReference type="ChEBI" id="CHEBI:61557"/>
        <dbReference type="ChEBI" id="CHEBI:456216"/>
        <dbReference type="EC" id="2.7.4.6"/>
    </reaction>
</comment>
<comment type="cofactor">
    <cofactor evidence="1">
        <name>Mg(2+)</name>
        <dbReference type="ChEBI" id="CHEBI:18420"/>
    </cofactor>
</comment>
<comment type="subunit">
    <text evidence="1">Homotetramer.</text>
</comment>
<comment type="subcellular location">
    <subcellularLocation>
        <location evidence="1">Cytoplasm</location>
    </subcellularLocation>
</comment>
<comment type="similarity">
    <text evidence="1">Belongs to the NDK family.</text>
</comment>
<sequence length="141" mass="15312">MAIERTLSIVKPDAVAKNVIGKIYDRFESAGLKIVAAKMKQLSRAEAEGFYAVHKERPFFKDLVDFMVSGPVMIQALEGENAVLKNRELMGATDPKKAEAGTIRADFAESIDANAVHGSDSVENAAIEVAYFFAASEISSR</sequence>
<gene>
    <name evidence="1" type="primary">ndk</name>
    <name type="ordered locus">CV_3542</name>
</gene>
<accession>Q7NS84</accession>
<keyword id="KW-0067">ATP-binding</keyword>
<keyword id="KW-0963">Cytoplasm</keyword>
<keyword id="KW-0418">Kinase</keyword>
<keyword id="KW-0460">Magnesium</keyword>
<keyword id="KW-0479">Metal-binding</keyword>
<keyword id="KW-0546">Nucleotide metabolism</keyword>
<keyword id="KW-0547">Nucleotide-binding</keyword>
<keyword id="KW-0597">Phosphoprotein</keyword>
<keyword id="KW-1185">Reference proteome</keyword>
<keyword id="KW-0808">Transferase</keyword>
<organism>
    <name type="scientific">Chromobacterium violaceum (strain ATCC 12472 / DSM 30191 / JCM 1249 / CCUG 213 / NBRC 12614 / NCIMB 9131 / NCTC 9757 / MK)</name>
    <dbReference type="NCBI Taxonomy" id="243365"/>
    <lineage>
        <taxon>Bacteria</taxon>
        <taxon>Pseudomonadati</taxon>
        <taxon>Pseudomonadota</taxon>
        <taxon>Betaproteobacteria</taxon>
        <taxon>Neisseriales</taxon>
        <taxon>Chromobacteriaceae</taxon>
        <taxon>Chromobacterium</taxon>
    </lineage>
</organism>
<dbReference type="EC" id="2.7.4.6" evidence="1"/>
<dbReference type="EMBL" id="AE016825">
    <property type="protein sequence ID" value="AAQ61204.1"/>
    <property type="molecule type" value="Genomic_DNA"/>
</dbReference>
<dbReference type="RefSeq" id="WP_011137089.1">
    <property type="nucleotide sequence ID" value="NC_005085.1"/>
</dbReference>
<dbReference type="SMR" id="Q7NS84"/>
<dbReference type="STRING" id="243365.CV_3542"/>
<dbReference type="GeneID" id="97480501"/>
<dbReference type="KEGG" id="cvi:CV_3542"/>
<dbReference type="eggNOG" id="COG0105">
    <property type="taxonomic scope" value="Bacteria"/>
</dbReference>
<dbReference type="HOGENOM" id="CLU_060216_8_1_4"/>
<dbReference type="OrthoDB" id="9801161at2"/>
<dbReference type="Proteomes" id="UP000001424">
    <property type="component" value="Chromosome"/>
</dbReference>
<dbReference type="GO" id="GO:0005737">
    <property type="term" value="C:cytoplasm"/>
    <property type="evidence" value="ECO:0007669"/>
    <property type="project" value="UniProtKB-SubCell"/>
</dbReference>
<dbReference type="GO" id="GO:0005524">
    <property type="term" value="F:ATP binding"/>
    <property type="evidence" value="ECO:0007669"/>
    <property type="project" value="UniProtKB-UniRule"/>
</dbReference>
<dbReference type="GO" id="GO:0046872">
    <property type="term" value="F:metal ion binding"/>
    <property type="evidence" value="ECO:0007669"/>
    <property type="project" value="UniProtKB-KW"/>
</dbReference>
<dbReference type="GO" id="GO:0004550">
    <property type="term" value="F:nucleoside diphosphate kinase activity"/>
    <property type="evidence" value="ECO:0007669"/>
    <property type="project" value="UniProtKB-UniRule"/>
</dbReference>
<dbReference type="GO" id="GO:0006241">
    <property type="term" value="P:CTP biosynthetic process"/>
    <property type="evidence" value="ECO:0007669"/>
    <property type="project" value="UniProtKB-UniRule"/>
</dbReference>
<dbReference type="GO" id="GO:0006183">
    <property type="term" value="P:GTP biosynthetic process"/>
    <property type="evidence" value="ECO:0007669"/>
    <property type="project" value="UniProtKB-UniRule"/>
</dbReference>
<dbReference type="GO" id="GO:0006228">
    <property type="term" value="P:UTP biosynthetic process"/>
    <property type="evidence" value="ECO:0007669"/>
    <property type="project" value="UniProtKB-UniRule"/>
</dbReference>
<dbReference type="CDD" id="cd04413">
    <property type="entry name" value="NDPk_I"/>
    <property type="match status" value="1"/>
</dbReference>
<dbReference type="FunFam" id="3.30.70.141:FF:000001">
    <property type="entry name" value="Nucleoside diphosphate kinase"/>
    <property type="match status" value="1"/>
</dbReference>
<dbReference type="Gene3D" id="3.30.70.141">
    <property type="entry name" value="Nucleoside diphosphate kinase-like domain"/>
    <property type="match status" value="1"/>
</dbReference>
<dbReference type="HAMAP" id="MF_00451">
    <property type="entry name" value="NDP_kinase"/>
    <property type="match status" value="1"/>
</dbReference>
<dbReference type="InterPro" id="IPR034907">
    <property type="entry name" value="NDK-like_dom"/>
</dbReference>
<dbReference type="InterPro" id="IPR036850">
    <property type="entry name" value="NDK-like_dom_sf"/>
</dbReference>
<dbReference type="InterPro" id="IPR001564">
    <property type="entry name" value="Nucleoside_diP_kinase"/>
</dbReference>
<dbReference type="InterPro" id="IPR023005">
    <property type="entry name" value="Nucleoside_diP_kinase_AS"/>
</dbReference>
<dbReference type="NCBIfam" id="NF001908">
    <property type="entry name" value="PRK00668.1"/>
    <property type="match status" value="1"/>
</dbReference>
<dbReference type="PANTHER" id="PTHR11349">
    <property type="entry name" value="NUCLEOSIDE DIPHOSPHATE KINASE"/>
    <property type="match status" value="1"/>
</dbReference>
<dbReference type="Pfam" id="PF00334">
    <property type="entry name" value="NDK"/>
    <property type="match status" value="1"/>
</dbReference>
<dbReference type="PRINTS" id="PR01243">
    <property type="entry name" value="NUCDPKINASE"/>
</dbReference>
<dbReference type="SMART" id="SM00562">
    <property type="entry name" value="NDK"/>
    <property type="match status" value="1"/>
</dbReference>
<dbReference type="SUPFAM" id="SSF54919">
    <property type="entry name" value="Nucleoside diphosphate kinase, NDK"/>
    <property type="match status" value="1"/>
</dbReference>
<dbReference type="PROSITE" id="PS00469">
    <property type="entry name" value="NDPK"/>
    <property type="match status" value="1"/>
</dbReference>
<dbReference type="PROSITE" id="PS51374">
    <property type="entry name" value="NDPK_LIKE"/>
    <property type="match status" value="1"/>
</dbReference>
<evidence type="ECO:0000255" key="1">
    <source>
        <dbReference type="HAMAP-Rule" id="MF_00451"/>
    </source>
</evidence>
<proteinExistence type="inferred from homology"/>
<feature type="chain" id="PRO_0000136969" description="Nucleoside diphosphate kinase">
    <location>
        <begin position="1"/>
        <end position="141"/>
    </location>
</feature>
<feature type="active site" description="Pros-phosphohistidine intermediate" evidence="1">
    <location>
        <position position="117"/>
    </location>
</feature>
<feature type="binding site" evidence="1">
    <location>
        <position position="11"/>
    </location>
    <ligand>
        <name>ATP</name>
        <dbReference type="ChEBI" id="CHEBI:30616"/>
    </ligand>
</feature>
<feature type="binding site" evidence="1">
    <location>
        <position position="59"/>
    </location>
    <ligand>
        <name>ATP</name>
        <dbReference type="ChEBI" id="CHEBI:30616"/>
    </ligand>
</feature>
<feature type="binding site" evidence="1">
    <location>
        <position position="87"/>
    </location>
    <ligand>
        <name>ATP</name>
        <dbReference type="ChEBI" id="CHEBI:30616"/>
    </ligand>
</feature>
<feature type="binding site" evidence="1">
    <location>
        <position position="93"/>
    </location>
    <ligand>
        <name>ATP</name>
        <dbReference type="ChEBI" id="CHEBI:30616"/>
    </ligand>
</feature>
<feature type="binding site" evidence="1">
    <location>
        <position position="104"/>
    </location>
    <ligand>
        <name>ATP</name>
        <dbReference type="ChEBI" id="CHEBI:30616"/>
    </ligand>
</feature>
<feature type="binding site" evidence="1">
    <location>
        <position position="114"/>
    </location>
    <ligand>
        <name>ATP</name>
        <dbReference type="ChEBI" id="CHEBI:30616"/>
    </ligand>
</feature>
<name>NDK_CHRVO</name>
<reference key="1">
    <citation type="journal article" date="2003" name="Proc. Natl. Acad. Sci. U.S.A.">
        <title>The complete genome sequence of Chromobacterium violaceum reveals remarkable and exploitable bacterial adaptability.</title>
        <authorList>
            <person name="Vasconcelos A.T.R."/>
            <person name="de Almeida D.F."/>
            <person name="Hungria M."/>
            <person name="Guimaraes C.T."/>
            <person name="Antonio R.V."/>
            <person name="Almeida F.C."/>
            <person name="de Almeida L.G.P."/>
            <person name="de Almeida R."/>
            <person name="Alves-Gomes J.A."/>
            <person name="Andrade E.M."/>
            <person name="Araripe J."/>
            <person name="de Araujo M.F.F."/>
            <person name="Astolfi-Filho S."/>
            <person name="Azevedo V."/>
            <person name="Baptista A.J."/>
            <person name="Bataus L.A.M."/>
            <person name="Batista J.S."/>
            <person name="Belo A."/>
            <person name="van den Berg C."/>
            <person name="Bogo M."/>
            <person name="Bonatto S."/>
            <person name="Bordignon J."/>
            <person name="Brigido M.M."/>
            <person name="Brito C.A."/>
            <person name="Brocchi M."/>
            <person name="Burity H.A."/>
            <person name="Camargo A.A."/>
            <person name="Cardoso D.D.P."/>
            <person name="Carneiro N.P."/>
            <person name="Carraro D.M."/>
            <person name="Carvalho C.M.B."/>
            <person name="Cascardo J.C.M."/>
            <person name="Cavada B.S."/>
            <person name="Chueire L.M.O."/>
            <person name="Creczynski-Pasa T.B."/>
            <person name="Cunha-Junior N.C."/>
            <person name="Fagundes N."/>
            <person name="Falcao C.L."/>
            <person name="Fantinatti F."/>
            <person name="Farias I.P."/>
            <person name="Felipe M.S.S."/>
            <person name="Ferrari L.P."/>
            <person name="Ferro J.A."/>
            <person name="Ferro M.I.T."/>
            <person name="Franco G.R."/>
            <person name="Freitas N.S.A."/>
            <person name="Furlan L.R."/>
            <person name="Gazzinelli R.T."/>
            <person name="Gomes E.A."/>
            <person name="Goncalves P.R."/>
            <person name="Grangeiro T.B."/>
            <person name="Grattapaglia D."/>
            <person name="Grisard E.C."/>
            <person name="Hanna E.S."/>
            <person name="Jardim S.N."/>
            <person name="Laurino J."/>
            <person name="Leoi L.C.T."/>
            <person name="Lima L.F.A."/>
            <person name="Loureiro M.F."/>
            <person name="Lyra M.C.C.P."/>
            <person name="Madeira H.M.F."/>
            <person name="Manfio G.P."/>
            <person name="Maranhao A.Q."/>
            <person name="Martins W.S."/>
            <person name="di Mauro S.M.Z."/>
            <person name="de Medeiros S.R.B."/>
            <person name="Meissner R.V."/>
            <person name="Moreira M.A.M."/>
            <person name="Nascimento F.F."/>
            <person name="Nicolas M.F."/>
            <person name="Oliveira J.G."/>
            <person name="Oliveira S.C."/>
            <person name="Paixao R.F.C."/>
            <person name="Parente J.A."/>
            <person name="Pedrosa F.O."/>
            <person name="Pena S.D.J."/>
            <person name="Pereira J.O."/>
            <person name="Pereira M."/>
            <person name="Pinto L.S.R.C."/>
            <person name="Pinto L.S."/>
            <person name="Porto J.I.R."/>
            <person name="Potrich D.P."/>
            <person name="Ramalho-Neto C.E."/>
            <person name="Reis A.M.M."/>
            <person name="Rigo L.U."/>
            <person name="Rondinelli E."/>
            <person name="Santos E.B.P."/>
            <person name="Santos F.R."/>
            <person name="Schneider M.P.C."/>
            <person name="Seuanez H.N."/>
            <person name="Silva A.M.R."/>
            <person name="da Silva A.L.C."/>
            <person name="Silva D.W."/>
            <person name="Silva R."/>
            <person name="Simoes I.C."/>
            <person name="Simon D."/>
            <person name="Soares C.M.A."/>
            <person name="Soares R.B.A."/>
            <person name="Souza E.M."/>
            <person name="Souza K.R.L."/>
            <person name="Souza R.C."/>
            <person name="Steffens M.B.R."/>
            <person name="Steindel M."/>
            <person name="Teixeira S.R."/>
            <person name="Urmenyi T."/>
            <person name="Vettore A."/>
            <person name="Wassem R."/>
            <person name="Zaha A."/>
            <person name="Simpson A.J.G."/>
        </authorList>
    </citation>
    <scope>NUCLEOTIDE SEQUENCE [LARGE SCALE GENOMIC DNA]</scope>
    <source>
        <strain>ATCC 12472 / DSM 30191 / JCM 1249 / CCUG 213 / NBRC 12614 / NCIMB 9131 / NCTC 9757 / MK</strain>
    </source>
</reference>